<name>DGTL1_BRUA4</name>
<accession>A6X1G2</accession>
<feature type="chain" id="PRO_1000066431" description="Deoxyguanosinetriphosphate triphosphohydrolase-like protein">
    <location>
        <begin position="1"/>
        <end position="402"/>
    </location>
</feature>
<feature type="domain" description="HD" evidence="2">
    <location>
        <begin position="73"/>
        <end position="217"/>
    </location>
</feature>
<gene>
    <name type="ordered locus">Oant_2352</name>
</gene>
<dbReference type="EMBL" id="CP000758">
    <property type="protein sequence ID" value="ABS15066.1"/>
    <property type="molecule type" value="Genomic_DNA"/>
</dbReference>
<dbReference type="RefSeq" id="WP_012092219.1">
    <property type="nucleotide sequence ID" value="NC_009667.1"/>
</dbReference>
<dbReference type="SMR" id="A6X1G2"/>
<dbReference type="STRING" id="439375.Oant_2352"/>
<dbReference type="KEGG" id="oan:Oant_2352"/>
<dbReference type="PATRIC" id="fig|439375.7.peg.2482"/>
<dbReference type="eggNOG" id="COG0232">
    <property type="taxonomic scope" value="Bacteria"/>
</dbReference>
<dbReference type="HOGENOM" id="CLU_028163_1_0_5"/>
<dbReference type="PhylomeDB" id="A6X1G2"/>
<dbReference type="Proteomes" id="UP000002301">
    <property type="component" value="Chromosome 1"/>
</dbReference>
<dbReference type="GO" id="GO:0016793">
    <property type="term" value="F:triphosphoric monoester hydrolase activity"/>
    <property type="evidence" value="ECO:0007669"/>
    <property type="project" value="InterPro"/>
</dbReference>
<dbReference type="CDD" id="cd00077">
    <property type="entry name" value="HDc"/>
    <property type="match status" value="1"/>
</dbReference>
<dbReference type="Gene3D" id="1.10.3210.10">
    <property type="entry name" value="Hypothetical protein af1432"/>
    <property type="match status" value="1"/>
</dbReference>
<dbReference type="HAMAP" id="MF_01212">
    <property type="entry name" value="dGTPase_type2"/>
    <property type="match status" value="1"/>
</dbReference>
<dbReference type="InterPro" id="IPR006261">
    <property type="entry name" value="dGTPase"/>
</dbReference>
<dbReference type="InterPro" id="IPR051094">
    <property type="entry name" value="Diverse_Catalytic_Enzymes"/>
</dbReference>
<dbReference type="InterPro" id="IPR023023">
    <property type="entry name" value="dNTPase_2"/>
</dbReference>
<dbReference type="InterPro" id="IPR003607">
    <property type="entry name" value="HD/PDEase_dom"/>
</dbReference>
<dbReference type="InterPro" id="IPR006674">
    <property type="entry name" value="HD_domain"/>
</dbReference>
<dbReference type="InterPro" id="IPR006675">
    <property type="entry name" value="HDIG_dom"/>
</dbReference>
<dbReference type="InterPro" id="IPR026875">
    <property type="entry name" value="PHydrolase_assoc_dom"/>
</dbReference>
<dbReference type="NCBIfam" id="TIGR01353">
    <property type="entry name" value="dGTP_triPase"/>
    <property type="match status" value="1"/>
</dbReference>
<dbReference type="NCBIfam" id="TIGR00277">
    <property type="entry name" value="HDIG"/>
    <property type="match status" value="1"/>
</dbReference>
<dbReference type="NCBIfam" id="NF002326">
    <property type="entry name" value="PRK01286.1-1"/>
    <property type="match status" value="1"/>
</dbReference>
<dbReference type="NCBIfam" id="NF002328">
    <property type="entry name" value="PRK01286.1-3"/>
    <property type="match status" value="1"/>
</dbReference>
<dbReference type="PANTHER" id="PTHR35795:SF1">
    <property type="entry name" value="BIS(5'-NUCLEOSYL)-TETRAPHOSPHATASE, SYMMETRICAL"/>
    <property type="match status" value="1"/>
</dbReference>
<dbReference type="PANTHER" id="PTHR35795">
    <property type="entry name" value="SLR1885 PROTEIN"/>
    <property type="match status" value="1"/>
</dbReference>
<dbReference type="Pfam" id="PF01966">
    <property type="entry name" value="HD"/>
    <property type="match status" value="1"/>
</dbReference>
<dbReference type="Pfam" id="PF13286">
    <property type="entry name" value="HD_assoc"/>
    <property type="match status" value="1"/>
</dbReference>
<dbReference type="SMART" id="SM00471">
    <property type="entry name" value="HDc"/>
    <property type="match status" value="1"/>
</dbReference>
<dbReference type="SUPFAM" id="SSF109604">
    <property type="entry name" value="HD-domain/PDEase-like"/>
    <property type="match status" value="1"/>
</dbReference>
<dbReference type="PROSITE" id="PS51831">
    <property type="entry name" value="HD"/>
    <property type="match status" value="1"/>
</dbReference>
<reference key="1">
    <citation type="journal article" date="2011" name="J. Bacteriol.">
        <title>Genome of Ochrobactrum anthropi ATCC 49188 T, a versatile opportunistic pathogen and symbiont of several eukaryotic hosts.</title>
        <authorList>
            <person name="Chain P.S."/>
            <person name="Lang D.M."/>
            <person name="Comerci D.J."/>
            <person name="Malfatti S.A."/>
            <person name="Vergez L.M."/>
            <person name="Shin M."/>
            <person name="Ugalde R.A."/>
            <person name="Garcia E."/>
            <person name="Tolmasky M.E."/>
        </authorList>
    </citation>
    <scope>NUCLEOTIDE SEQUENCE [LARGE SCALE GENOMIC DNA]</scope>
    <source>
        <strain>ATCC 49188 / DSM 6882 / CCUG 24695 / JCM 21032 / LMG 3331 / NBRC 15819 / NCTC 12168 / Alc 37</strain>
    </source>
</reference>
<keyword id="KW-0378">Hydrolase</keyword>
<keyword id="KW-1185">Reference proteome</keyword>
<comment type="similarity">
    <text evidence="1">Belongs to the dGTPase family. Type 2 subfamily.</text>
</comment>
<sequence>MSLEGIGFGYRERAPYACDPARSRGRLVPEPESPTRTPFQRDRDRIIHSTAFRRLKHKTQVFIAHEGDHYRTRLTHTIEVAQIARALARALRLDEDLAEAVALVHDFGHTPFGHTGEEALNDRMKAFGGFDHNAQSLRIVTKLEHRYADFDGLNLSWETLEGLVKHNGPLLGAHAAHPDAAVPLPILDFNERYDLELTRFASLEAQCAAIADDIAYNAHDIDDGLRAGLLSLDALDEVPLTKRLLDLVRTRYPDLDPVRTGHELVRRQITIMVEDVIEEAQRRLAAAKPQSVEDVHGQSHALVAFSDTMRTDEKVLKRFLFKNLYFHDSVVVRRHAADKILQDLFDTCFANPSIMPSEWQSGCETLDEAARARRVADYLAGMTDNYAVREHRRLFDHTPDLA</sequence>
<protein>
    <recommendedName>
        <fullName evidence="1">Deoxyguanosinetriphosphate triphosphohydrolase-like protein</fullName>
    </recommendedName>
</protein>
<proteinExistence type="inferred from homology"/>
<evidence type="ECO:0000255" key="1">
    <source>
        <dbReference type="HAMAP-Rule" id="MF_01212"/>
    </source>
</evidence>
<evidence type="ECO:0000255" key="2">
    <source>
        <dbReference type="PROSITE-ProRule" id="PRU01175"/>
    </source>
</evidence>
<organism>
    <name type="scientific">Brucella anthropi (strain ATCC 49188 / DSM 6882 / CCUG 24695 / JCM 21032 / LMG 3331 / NBRC 15819 / NCTC 12168 / Alc 37)</name>
    <name type="common">Ochrobactrum anthropi</name>
    <dbReference type="NCBI Taxonomy" id="439375"/>
    <lineage>
        <taxon>Bacteria</taxon>
        <taxon>Pseudomonadati</taxon>
        <taxon>Pseudomonadota</taxon>
        <taxon>Alphaproteobacteria</taxon>
        <taxon>Hyphomicrobiales</taxon>
        <taxon>Brucellaceae</taxon>
        <taxon>Brucella/Ochrobactrum group</taxon>
        <taxon>Brucella</taxon>
    </lineage>
</organism>